<keyword id="KW-0004">4Fe-4S</keyword>
<keyword id="KW-0963">Cytoplasm</keyword>
<keyword id="KW-0408">Iron</keyword>
<keyword id="KW-0411">Iron-sulfur</keyword>
<keyword id="KW-0479">Metal-binding</keyword>
<keyword id="KW-0949">S-adenosyl-L-methionine</keyword>
<keyword id="KW-0808">Transferase</keyword>
<keyword id="KW-0819">tRNA processing</keyword>
<proteinExistence type="inferred from homology"/>
<sequence length="474" mass="53380">MTQKLHIKTWGCQMNEYDSSKMADLLLNTHGLELTDVPEEADVLLLNTCSIREKAQEKVFHQLGRWKELKKQNPSLVIGVGGCVASQEGEHIRSRAPYVDIVFGPQTLHRLPEMINQIRGGKSAVVDVSFPEIEKFDRLPEPRAEGPTAFVSIMEGCNKYCSFCVVPYTRGEEVSRPVDDVLFEIAQLAEQGVREVNLLGQNVNAYRGPTHDGGICSFAELLRLVASIDGIDRLRFTTSHPIEFTDDIIDVYADTPELVSFLHLPVQSGSDRVLNLMKRNHTALEYKSIIRKLKKVRPNIQISSDFIVGFPGETDQDFEDTMNLIAQVNFDMSFSFIYSARPGTPAADMPDDVTEEEKKQRLYLLQQRINNQAAQFSRAMLGTEQRVLVEGPSKKDIMELTGRTETNRIVNFAGTPNMIGKFVDIKITDVYTNSLRGEVVRTEDEMGLRIVQSPQVVINRTRKEDELGVGHYQG</sequence>
<protein>
    <recommendedName>
        <fullName evidence="1">tRNA-2-methylthio-N(6)-dimethylallyladenosine synthase</fullName>
        <ecNumber evidence="1">2.8.4.3</ecNumber>
    </recommendedName>
    <alternativeName>
        <fullName evidence="1">(Dimethylallyl)adenosine tRNA methylthiotransferase MiaB</fullName>
    </alternativeName>
    <alternativeName>
        <fullName evidence="1">tRNA-i(6)A37 methylthiotransferase</fullName>
    </alternativeName>
</protein>
<feature type="chain" id="PRO_0000374331" description="tRNA-2-methylthio-N(6)-dimethylallyladenosine synthase">
    <location>
        <begin position="1"/>
        <end position="474"/>
    </location>
</feature>
<feature type="domain" description="MTTase N-terminal" evidence="1">
    <location>
        <begin position="3"/>
        <end position="120"/>
    </location>
</feature>
<feature type="domain" description="Radical SAM core" evidence="2">
    <location>
        <begin position="143"/>
        <end position="375"/>
    </location>
</feature>
<feature type="domain" description="TRAM" evidence="1">
    <location>
        <begin position="378"/>
        <end position="441"/>
    </location>
</feature>
<feature type="binding site" evidence="1">
    <location>
        <position position="12"/>
    </location>
    <ligand>
        <name>[4Fe-4S] cluster</name>
        <dbReference type="ChEBI" id="CHEBI:49883"/>
        <label>1</label>
    </ligand>
</feature>
<feature type="binding site" evidence="1">
    <location>
        <position position="49"/>
    </location>
    <ligand>
        <name>[4Fe-4S] cluster</name>
        <dbReference type="ChEBI" id="CHEBI:49883"/>
        <label>1</label>
    </ligand>
</feature>
<feature type="binding site" evidence="1">
    <location>
        <position position="83"/>
    </location>
    <ligand>
        <name>[4Fe-4S] cluster</name>
        <dbReference type="ChEBI" id="CHEBI:49883"/>
        <label>1</label>
    </ligand>
</feature>
<feature type="binding site" evidence="1">
    <location>
        <position position="157"/>
    </location>
    <ligand>
        <name>[4Fe-4S] cluster</name>
        <dbReference type="ChEBI" id="CHEBI:49883"/>
        <label>2</label>
        <note>4Fe-4S-S-AdoMet</note>
    </ligand>
</feature>
<feature type="binding site" evidence="1">
    <location>
        <position position="161"/>
    </location>
    <ligand>
        <name>[4Fe-4S] cluster</name>
        <dbReference type="ChEBI" id="CHEBI:49883"/>
        <label>2</label>
        <note>4Fe-4S-S-AdoMet</note>
    </ligand>
</feature>
<feature type="binding site" evidence="1">
    <location>
        <position position="164"/>
    </location>
    <ligand>
        <name>[4Fe-4S] cluster</name>
        <dbReference type="ChEBI" id="CHEBI:49883"/>
        <label>2</label>
        <note>4Fe-4S-S-AdoMet</note>
    </ligand>
</feature>
<gene>
    <name evidence="1" type="primary">miaB</name>
    <name type="ordered locus">HS_1155</name>
</gene>
<evidence type="ECO:0000255" key="1">
    <source>
        <dbReference type="HAMAP-Rule" id="MF_01864"/>
    </source>
</evidence>
<evidence type="ECO:0000255" key="2">
    <source>
        <dbReference type="PROSITE-ProRule" id="PRU01266"/>
    </source>
</evidence>
<dbReference type="EC" id="2.8.4.3" evidence="1"/>
<dbReference type="EMBL" id="CP000436">
    <property type="protein sequence ID" value="ABI25430.1"/>
    <property type="molecule type" value="Genomic_DNA"/>
</dbReference>
<dbReference type="SMR" id="Q0I3Z1"/>
<dbReference type="KEGG" id="hso:HS_1155"/>
<dbReference type="eggNOG" id="COG0621">
    <property type="taxonomic scope" value="Bacteria"/>
</dbReference>
<dbReference type="HOGENOM" id="CLU_018697_2_0_6"/>
<dbReference type="GO" id="GO:0005829">
    <property type="term" value="C:cytosol"/>
    <property type="evidence" value="ECO:0007669"/>
    <property type="project" value="TreeGrafter"/>
</dbReference>
<dbReference type="GO" id="GO:0051539">
    <property type="term" value="F:4 iron, 4 sulfur cluster binding"/>
    <property type="evidence" value="ECO:0007669"/>
    <property type="project" value="UniProtKB-UniRule"/>
</dbReference>
<dbReference type="GO" id="GO:0046872">
    <property type="term" value="F:metal ion binding"/>
    <property type="evidence" value="ECO:0007669"/>
    <property type="project" value="UniProtKB-KW"/>
</dbReference>
<dbReference type="GO" id="GO:0035597">
    <property type="term" value="F:N6-isopentenyladenosine methylthiotransferase activity"/>
    <property type="evidence" value="ECO:0007669"/>
    <property type="project" value="TreeGrafter"/>
</dbReference>
<dbReference type="CDD" id="cd01335">
    <property type="entry name" value="Radical_SAM"/>
    <property type="match status" value="1"/>
</dbReference>
<dbReference type="FunFam" id="3.40.50.12160:FF:000001">
    <property type="entry name" value="tRNA-2-methylthio-N(6)-dimethylallyladenosine synthase"/>
    <property type="match status" value="1"/>
</dbReference>
<dbReference type="FunFam" id="3.80.30.20:FF:000001">
    <property type="entry name" value="tRNA-2-methylthio-N(6)-dimethylallyladenosine synthase 2"/>
    <property type="match status" value="1"/>
</dbReference>
<dbReference type="Gene3D" id="3.40.50.12160">
    <property type="entry name" value="Methylthiotransferase, N-terminal domain"/>
    <property type="match status" value="1"/>
</dbReference>
<dbReference type="Gene3D" id="3.80.30.20">
    <property type="entry name" value="tm_1862 like domain"/>
    <property type="match status" value="1"/>
</dbReference>
<dbReference type="HAMAP" id="MF_01864">
    <property type="entry name" value="tRNA_metthiotr_MiaB"/>
    <property type="match status" value="1"/>
</dbReference>
<dbReference type="InterPro" id="IPR006638">
    <property type="entry name" value="Elp3/MiaA/NifB-like_rSAM"/>
</dbReference>
<dbReference type="InterPro" id="IPR005839">
    <property type="entry name" value="Methylthiotransferase"/>
</dbReference>
<dbReference type="InterPro" id="IPR020612">
    <property type="entry name" value="Methylthiotransferase_CS"/>
</dbReference>
<dbReference type="InterPro" id="IPR013848">
    <property type="entry name" value="Methylthiotransferase_N"/>
</dbReference>
<dbReference type="InterPro" id="IPR038135">
    <property type="entry name" value="Methylthiotransferase_N_sf"/>
</dbReference>
<dbReference type="InterPro" id="IPR006463">
    <property type="entry name" value="MiaB_methiolase"/>
</dbReference>
<dbReference type="InterPro" id="IPR007197">
    <property type="entry name" value="rSAM"/>
</dbReference>
<dbReference type="InterPro" id="IPR023404">
    <property type="entry name" value="rSAM_horseshoe"/>
</dbReference>
<dbReference type="InterPro" id="IPR002792">
    <property type="entry name" value="TRAM_dom"/>
</dbReference>
<dbReference type="NCBIfam" id="TIGR01574">
    <property type="entry name" value="miaB-methiolase"/>
    <property type="match status" value="1"/>
</dbReference>
<dbReference type="NCBIfam" id="TIGR00089">
    <property type="entry name" value="MiaB/RimO family radical SAM methylthiotransferase"/>
    <property type="match status" value="1"/>
</dbReference>
<dbReference type="PANTHER" id="PTHR43020">
    <property type="entry name" value="CDK5 REGULATORY SUBUNIT-ASSOCIATED PROTEIN 1"/>
    <property type="match status" value="1"/>
</dbReference>
<dbReference type="PANTHER" id="PTHR43020:SF2">
    <property type="entry name" value="MITOCHONDRIAL TRNA METHYLTHIOTRANSFERASE CDK5RAP1"/>
    <property type="match status" value="1"/>
</dbReference>
<dbReference type="Pfam" id="PF04055">
    <property type="entry name" value="Radical_SAM"/>
    <property type="match status" value="1"/>
</dbReference>
<dbReference type="Pfam" id="PF01938">
    <property type="entry name" value="TRAM"/>
    <property type="match status" value="1"/>
</dbReference>
<dbReference type="Pfam" id="PF00919">
    <property type="entry name" value="UPF0004"/>
    <property type="match status" value="1"/>
</dbReference>
<dbReference type="SFLD" id="SFLDF00273">
    <property type="entry name" value="(dimethylallyl)adenosine_tRNA"/>
    <property type="match status" value="1"/>
</dbReference>
<dbReference type="SFLD" id="SFLDG01082">
    <property type="entry name" value="B12-binding_domain_containing"/>
    <property type="match status" value="1"/>
</dbReference>
<dbReference type="SFLD" id="SFLDG01061">
    <property type="entry name" value="methylthiotransferase"/>
    <property type="match status" value="1"/>
</dbReference>
<dbReference type="SMART" id="SM00729">
    <property type="entry name" value="Elp3"/>
    <property type="match status" value="1"/>
</dbReference>
<dbReference type="SUPFAM" id="SSF102114">
    <property type="entry name" value="Radical SAM enzymes"/>
    <property type="match status" value="1"/>
</dbReference>
<dbReference type="PROSITE" id="PS51449">
    <property type="entry name" value="MTTASE_N"/>
    <property type="match status" value="1"/>
</dbReference>
<dbReference type="PROSITE" id="PS01278">
    <property type="entry name" value="MTTASE_RADICAL"/>
    <property type="match status" value="1"/>
</dbReference>
<dbReference type="PROSITE" id="PS51918">
    <property type="entry name" value="RADICAL_SAM"/>
    <property type="match status" value="1"/>
</dbReference>
<dbReference type="PROSITE" id="PS50926">
    <property type="entry name" value="TRAM"/>
    <property type="match status" value="1"/>
</dbReference>
<accession>Q0I3Z1</accession>
<comment type="function">
    <text evidence="1">Catalyzes the methylthiolation of N6-(dimethylallyl)adenosine (i(6)A), leading to the formation of 2-methylthio-N6-(dimethylallyl)adenosine (ms(2)i(6)A) at position 37 in tRNAs that read codons beginning with uridine.</text>
</comment>
<comment type="catalytic activity">
    <reaction evidence="1">
        <text>N(6)-dimethylallyladenosine(37) in tRNA + (sulfur carrier)-SH + AH2 + 2 S-adenosyl-L-methionine = 2-methylsulfanyl-N(6)-dimethylallyladenosine(37) in tRNA + (sulfur carrier)-H + 5'-deoxyadenosine + L-methionine + A + S-adenosyl-L-homocysteine + 2 H(+)</text>
        <dbReference type="Rhea" id="RHEA:37067"/>
        <dbReference type="Rhea" id="RHEA-COMP:10375"/>
        <dbReference type="Rhea" id="RHEA-COMP:10376"/>
        <dbReference type="Rhea" id="RHEA-COMP:14737"/>
        <dbReference type="Rhea" id="RHEA-COMP:14739"/>
        <dbReference type="ChEBI" id="CHEBI:13193"/>
        <dbReference type="ChEBI" id="CHEBI:15378"/>
        <dbReference type="ChEBI" id="CHEBI:17319"/>
        <dbReference type="ChEBI" id="CHEBI:17499"/>
        <dbReference type="ChEBI" id="CHEBI:29917"/>
        <dbReference type="ChEBI" id="CHEBI:57844"/>
        <dbReference type="ChEBI" id="CHEBI:57856"/>
        <dbReference type="ChEBI" id="CHEBI:59789"/>
        <dbReference type="ChEBI" id="CHEBI:64428"/>
        <dbReference type="ChEBI" id="CHEBI:74415"/>
        <dbReference type="ChEBI" id="CHEBI:74417"/>
        <dbReference type="EC" id="2.8.4.3"/>
    </reaction>
</comment>
<comment type="cofactor">
    <cofactor evidence="1">
        <name>[4Fe-4S] cluster</name>
        <dbReference type="ChEBI" id="CHEBI:49883"/>
    </cofactor>
    <text evidence="1">Binds 2 [4Fe-4S] clusters. One cluster is coordinated with 3 cysteines and an exchangeable S-adenosyl-L-methionine.</text>
</comment>
<comment type="subunit">
    <text evidence="1">Monomer.</text>
</comment>
<comment type="subcellular location">
    <subcellularLocation>
        <location evidence="1">Cytoplasm</location>
    </subcellularLocation>
</comment>
<comment type="similarity">
    <text evidence="1">Belongs to the methylthiotransferase family. MiaB subfamily.</text>
</comment>
<organism>
    <name type="scientific">Histophilus somni (strain 129Pt)</name>
    <name type="common">Haemophilus somnus</name>
    <dbReference type="NCBI Taxonomy" id="205914"/>
    <lineage>
        <taxon>Bacteria</taxon>
        <taxon>Pseudomonadati</taxon>
        <taxon>Pseudomonadota</taxon>
        <taxon>Gammaproteobacteria</taxon>
        <taxon>Pasteurellales</taxon>
        <taxon>Pasteurellaceae</taxon>
        <taxon>Histophilus</taxon>
    </lineage>
</organism>
<reference key="1">
    <citation type="journal article" date="2007" name="J. Bacteriol.">
        <title>Complete genome sequence of Haemophilus somnus (Histophilus somni) strain 129Pt and comparison to Haemophilus ducreyi 35000HP and Haemophilus influenzae Rd.</title>
        <authorList>
            <person name="Challacombe J.F."/>
            <person name="Duncan A.J."/>
            <person name="Brettin T.S."/>
            <person name="Bruce D."/>
            <person name="Chertkov O."/>
            <person name="Detter J.C."/>
            <person name="Han C.S."/>
            <person name="Misra M."/>
            <person name="Richardson P."/>
            <person name="Tapia R."/>
            <person name="Thayer N."/>
            <person name="Xie G."/>
            <person name="Inzana T.J."/>
        </authorList>
    </citation>
    <scope>NUCLEOTIDE SEQUENCE [LARGE SCALE GENOMIC DNA]</scope>
    <source>
        <strain>129Pt</strain>
    </source>
</reference>
<name>MIAB_HISS1</name>